<dbReference type="EC" id="5.4.2.10" evidence="1"/>
<dbReference type="EMBL" id="AM920689">
    <property type="protein sequence ID" value="CAP50973.1"/>
    <property type="molecule type" value="Genomic_DNA"/>
</dbReference>
<dbReference type="SMR" id="B0RR88"/>
<dbReference type="KEGG" id="xca:xcc-b100_1623"/>
<dbReference type="HOGENOM" id="CLU_016950_7_0_6"/>
<dbReference type="Proteomes" id="UP000001188">
    <property type="component" value="Chromosome"/>
</dbReference>
<dbReference type="GO" id="GO:0005829">
    <property type="term" value="C:cytosol"/>
    <property type="evidence" value="ECO:0007669"/>
    <property type="project" value="TreeGrafter"/>
</dbReference>
<dbReference type="GO" id="GO:0000287">
    <property type="term" value="F:magnesium ion binding"/>
    <property type="evidence" value="ECO:0007669"/>
    <property type="project" value="UniProtKB-UniRule"/>
</dbReference>
<dbReference type="GO" id="GO:0008966">
    <property type="term" value="F:phosphoglucosamine mutase activity"/>
    <property type="evidence" value="ECO:0007669"/>
    <property type="project" value="UniProtKB-UniRule"/>
</dbReference>
<dbReference type="GO" id="GO:0004615">
    <property type="term" value="F:phosphomannomutase activity"/>
    <property type="evidence" value="ECO:0007669"/>
    <property type="project" value="TreeGrafter"/>
</dbReference>
<dbReference type="GO" id="GO:0005975">
    <property type="term" value="P:carbohydrate metabolic process"/>
    <property type="evidence" value="ECO:0007669"/>
    <property type="project" value="InterPro"/>
</dbReference>
<dbReference type="GO" id="GO:0009252">
    <property type="term" value="P:peptidoglycan biosynthetic process"/>
    <property type="evidence" value="ECO:0007669"/>
    <property type="project" value="TreeGrafter"/>
</dbReference>
<dbReference type="GO" id="GO:0006048">
    <property type="term" value="P:UDP-N-acetylglucosamine biosynthetic process"/>
    <property type="evidence" value="ECO:0007669"/>
    <property type="project" value="TreeGrafter"/>
</dbReference>
<dbReference type="CDD" id="cd05802">
    <property type="entry name" value="GlmM"/>
    <property type="match status" value="1"/>
</dbReference>
<dbReference type="FunFam" id="3.30.310.50:FF:000001">
    <property type="entry name" value="Phosphoglucosamine mutase"/>
    <property type="match status" value="1"/>
</dbReference>
<dbReference type="FunFam" id="3.40.120.10:FF:000001">
    <property type="entry name" value="Phosphoglucosamine mutase"/>
    <property type="match status" value="1"/>
</dbReference>
<dbReference type="FunFam" id="3.40.120.10:FF:000003">
    <property type="entry name" value="Phosphoglucosamine mutase"/>
    <property type="match status" value="1"/>
</dbReference>
<dbReference type="Gene3D" id="3.40.120.10">
    <property type="entry name" value="Alpha-D-Glucose-1,6-Bisphosphate, subunit A, domain 3"/>
    <property type="match status" value="3"/>
</dbReference>
<dbReference type="Gene3D" id="3.30.310.50">
    <property type="entry name" value="Alpha-D-phosphohexomutase, C-terminal domain"/>
    <property type="match status" value="1"/>
</dbReference>
<dbReference type="HAMAP" id="MF_01554_B">
    <property type="entry name" value="GlmM_B"/>
    <property type="match status" value="1"/>
</dbReference>
<dbReference type="InterPro" id="IPR005844">
    <property type="entry name" value="A-D-PHexomutase_a/b/a-I"/>
</dbReference>
<dbReference type="InterPro" id="IPR016055">
    <property type="entry name" value="A-D-PHexomutase_a/b/a-I/II/III"/>
</dbReference>
<dbReference type="InterPro" id="IPR005845">
    <property type="entry name" value="A-D-PHexomutase_a/b/a-II"/>
</dbReference>
<dbReference type="InterPro" id="IPR005846">
    <property type="entry name" value="A-D-PHexomutase_a/b/a-III"/>
</dbReference>
<dbReference type="InterPro" id="IPR005843">
    <property type="entry name" value="A-D-PHexomutase_C"/>
</dbReference>
<dbReference type="InterPro" id="IPR036900">
    <property type="entry name" value="A-D-PHexomutase_C_sf"/>
</dbReference>
<dbReference type="InterPro" id="IPR016066">
    <property type="entry name" value="A-D-PHexomutase_CS"/>
</dbReference>
<dbReference type="InterPro" id="IPR005841">
    <property type="entry name" value="Alpha-D-phosphohexomutase_SF"/>
</dbReference>
<dbReference type="InterPro" id="IPR006352">
    <property type="entry name" value="GlmM_bact"/>
</dbReference>
<dbReference type="InterPro" id="IPR050060">
    <property type="entry name" value="Phosphoglucosamine_mutase"/>
</dbReference>
<dbReference type="NCBIfam" id="TIGR01455">
    <property type="entry name" value="glmM"/>
    <property type="match status" value="1"/>
</dbReference>
<dbReference type="NCBIfam" id="NF008139">
    <property type="entry name" value="PRK10887.1"/>
    <property type="match status" value="1"/>
</dbReference>
<dbReference type="PANTHER" id="PTHR42946:SF1">
    <property type="entry name" value="PHOSPHOGLUCOMUTASE (ALPHA-D-GLUCOSE-1,6-BISPHOSPHATE-DEPENDENT)"/>
    <property type="match status" value="1"/>
</dbReference>
<dbReference type="PANTHER" id="PTHR42946">
    <property type="entry name" value="PHOSPHOHEXOSE MUTASE"/>
    <property type="match status" value="1"/>
</dbReference>
<dbReference type="Pfam" id="PF02878">
    <property type="entry name" value="PGM_PMM_I"/>
    <property type="match status" value="1"/>
</dbReference>
<dbReference type="Pfam" id="PF02879">
    <property type="entry name" value="PGM_PMM_II"/>
    <property type="match status" value="1"/>
</dbReference>
<dbReference type="Pfam" id="PF02880">
    <property type="entry name" value="PGM_PMM_III"/>
    <property type="match status" value="1"/>
</dbReference>
<dbReference type="Pfam" id="PF00408">
    <property type="entry name" value="PGM_PMM_IV"/>
    <property type="match status" value="1"/>
</dbReference>
<dbReference type="PRINTS" id="PR00509">
    <property type="entry name" value="PGMPMM"/>
</dbReference>
<dbReference type="SUPFAM" id="SSF55957">
    <property type="entry name" value="Phosphoglucomutase, C-terminal domain"/>
    <property type="match status" value="1"/>
</dbReference>
<dbReference type="SUPFAM" id="SSF53738">
    <property type="entry name" value="Phosphoglucomutase, first 3 domains"/>
    <property type="match status" value="3"/>
</dbReference>
<dbReference type="PROSITE" id="PS00710">
    <property type="entry name" value="PGM_PMM"/>
    <property type="match status" value="1"/>
</dbReference>
<protein>
    <recommendedName>
        <fullName evidence="1">Phosphoglucosamine mutase</fullName>
        <ecNumber evidence="1">5.4.2.10</ecNumber>
    </recommendedName>
</protein>
<name>GLMM_XANCB</name>
<organism>
    <name type="scientific">Xanthomonas campestris pv. campestris (strain B100)</name>
    <dbReference type="NCBI Taxonomy" id="509169"/>
    <lineage>
        <taxon>Bacteria</taxon>
        <taxon>Pseudomonadati</taxon>
        <taxon>Pseudomonadota</taxon>
        <taxon>Gammaproteobacteria</taxon>
        <taxon>Lysobacterales</taxon>
        <taxon>Lysobacteraceae</taxon>
        <taxon>Xanthomonas</taxon>
    </lineage>
</organism>
<feature type="chain" id="PRO_1000201154" description="Phosphoglucosamine mutase">
    <location>
        <begin position="1"/>
        <end position="449"/>
    </location>
</feature>
<feature type="active site" description="Phosphoserine intermediate" evidence="1">
    <location>
        <position position="104"/>
    </location>
</feature>
<feature type="binding site" description="via phosphate group" evidence="1">
    <location>
        <position position="104"/>
    </location>
    <ligand>
        <name>Mg(2+)</name>
        <dbReference type="ChEBI" id="CHEBI:18420"/>
    </ligand>
</feature>
<feature type="binding site" evidence="1">
    <location>
        <position position="243"/>
    </location>
    <ligand>
        <name>Mg(2+)</name>
        <dbReference type="ChEBI" id="CHEBI:18420"/>
    </ligand>
</feature>
<feature type="binding site" evidence="1">
    <location>
        <position position="245"/>
    </location>
    <ligand>
        <name>Mg(2+)</name>
        <dbReference type="ChEBI" id="CHEBI:18420"/>
    </ligand>
</feature>
<feature type="binding site" evidence="1">
    <location>
        <position position="247"/>
    </location>
    <ligand>
        <name>Mg(2+)</name>
        <dbReference type="ChEBI" id="CHEBI:18420"/>
    </ligand>
</feature>
<feature type="modified residue" description="Phosphoserine" evidence="1">
    <location>
        <position position="104"/>
    </location>
</feature>
<evidence type="ECO:0000255" key="1">
    <source>
        <dbReference type="HAMAP-Rule" id="MF_01554"/>
    </source>
</evidence>
<proteinExistence type="inferred from homology"/>
<sequence length="449" mass="46968">MSSRKYFGTDGIRGRVGQGVISADFVLRLGNALGRVLTAGRSKRPLVLIGKDTRISGYMFEAALEAGLVAAGADVQLIGPMPTPAIAFLTSTLRADAGVVISASHNPHYDNGIKFFSAEGEKLDDATEAAIEAALDAPFHTVESERLGKAIRTRDAIGRYIEFCKASVPRGFTLHGLKMVLDCAHGATYHIAPMLFRELGAEVVVIGAAPDGLNINDGVGSTHIDNLAAKVRETGAQLGIAFDGDGDRVLMADDQGNPVDGDDLLYVLARSWQASGRLTGTVVGTLMTNYGLEKALAALQIPFQRAKVGDRYVHQALVEGGGTLGGETSGHLLCLDRATTGDGIVSALQVLEALGRDGHSLREALSSLSKVPQQTVNVRLGGGAAKAIVEAASVQQALQQAQAAVQGRGRAFLRPSGTEPVVRVTVEADEAGLMQDTLDRLAGAVRDAA</sequence>
<gene>
    <name evidence="1" type="primary">glmM</name>
    <name type="ordered locus">xcc-b100_1623</name>
</gene>
<comment type="function">
    <text evidence="1">Catalyzes the conversion of glucosamine-6-phosphate to glucosamine-1-phosphate.</text>
</comment>
<comment type="catalytic activity">
    <reaction evidence="1">
        <text>alpha-D-glucosamine 1-phosphate = D-glucosamine 6-phosphate</text>
        <dbReference type="Rhea" id="RHEA:23424"/>
        <dbReference type="ChEBI" id="CHEBI:58516"/>
        <dbReference type="ChEBI" id="CHEBI:58725"/>
        <dbReference type="EC" id="5.4.2.10"/>
    </reaction>
</comment>
<comment type="cofactor">
    <cofactor evidence="1">
        <name>Mg(2+)</name>
        <dbReference type="ChEBI" id="CHEBI:18420"/>
    </cofactor>
    <text evidence="1">Binds 1 Mg(2+) ion per subunit.</text>
</comment>
<comment type="PTM">
    <text evidence="1">Activated by phosphorylation.</text>
</comment>
<comment type="similarity">
    <text evidence="1">Belongs to the phosphohexose mutase family.</text>
</comment>
<keyword id="KW-0413">Isomerase</keyword>
<keyword id="KW-0460">Magnesium</keyword>
<keyword id="KW-0479">Metal-binding</keyword>
<keyword id="KW-0597">Phosphoprotein</keyword>
<accession>B0RR88</accession>
<reference key="1">
    <citation type="journal article" date="2008" name="J. Biotechnol.">
        <title>The genome of Xanthomonas campestris pv. campestris B100 and its use for the reconstruction of metabolic pathways involved in xanthan biosynthesis.</title>
        <authorList>
            <person name="Vorhoelter F.-J."/>
            <person name="Schneiker S."/>
            <person name="Goesmann A."/>
            <person name="Krause L."/>
            <person name="Bekel T."/>
            <person name="Kaiser O."/>
            <person name="Linke B."/>
            <person name="Patschkowski T."/>
            <person name="Rueckert C."/>
            <person name="Schmid J."/>
            <person name="Sidhu V.K."/>
            <person name="Sieber V."/>
            <person name="Tauch A."/>
            <person name="Watt S.A."/>
            <person name="Weisshaar B."/>
            <person name="Becker A."/>
            <person name="Niehaus K."/>
            <person name="Puehler A."/>
        </authorList>
    </citation>
    <scope>NUCLEOTIDE SEQUENCE [LARGE SCALE GENOMIC DNA]</scope>
    <source>
        <strain>B100</strain>
    </source>
</reference>